<comment type="function">
    <text evidence="1">Bidirectionally degrades single-stranded DNA into large acid-insoluble oligonucleotides, which are then degraded further into small acid-soluble oligonucleotides.</text>
</comment>
<comment type="catalytic activity">
    <reaction evidence="1">
        <text>Exonucleolytic cleavage in either 5'- to 3'- or 3'- to 5'-direction to yield nucleoside 5'-phosphates.</text>
        <dbReference type="EC" id="3.1.11.6"/>
    </reaction>
</comment>
<comment type="subunit">
    <text evidence="1">Heterooligomer composed of large and small subunits.</text>
</comment>
<comment type="subcellular location">
    <subcellularLocation>
        <location evidence="1">Cytoplasm</location>
    </subcellularLocation>
</comment>
<comment type="similarity">
    <text evidence="1">Belongs to the XseA family.</text>
</comment>
<evidence type="ECO:0000255" key="1">
    <source>
        <dbReference type="HAMAP-Rule" id="MF_00378"/>
    </source>
</evidence>
<dbReference type="EC" id="3.1.11.6" evidence="1"/>
<dbReference type="EMBL" id="AP009324">
    <property type="protein sequence ID" value="BAF78394.1"/>
    <property type="molecule type" value="Genomic_DNA"/>
</dbReference>
<dbReference type="RefSeq" id="WP_001286928.1">
    <property type="nucleotide sequence ID" value="NZ_CTYB01000003.1"/>
</dbReference>
<dbReference type="SMR" id="A7X2Q2"/>
<dbReference type="KEGG" id="saw:SAHV_1511"/>
<dbReference type="HOGENOM" id="CLU_023625_3_1_9"/>
<dbReference type="GO" id="GO:0005737">
    <property type="term" value="C:cytoplasm"/>
    <property type="evidence" value="ECO:0007669"/>
    <property type="project" value="UniProtKB-SubCell"/>
</dbReference>
<dbReference type="GO" id="GO:0009318">
    <property type="term" value="C:exodeoxyribonuclease VII complex"/>
    <property type="evidence" value="ECO:0007669"/>
    <property type="project" value="InterPro"/>
</dbReference>
<dbReference type="GO" id="GO:0008855">
    <property type="term" value="F:exodeoxyribonuclease VII activity"/>
    <property type="evidence" value="ECO:0007669"/>
    <property type="project" value="UniProtKB-UniRule"/>
</dbReference>
<dbReference type="GO" id="GO:0003676">
    <property type="term" value="F:nucleic acid binding"/>
    <property type="evidence" value="ECO:0007669"/>
    <property type="project" value="InterPro"/>
</dbReference>
<dbReference type="GO" id="GO:0006308">
    <property type="term" value="P:DNA catabolic process"/>
    <property type="evidence" value="ECO:0007669"/>
    <property type="project" value="UniProtKB-UniRule"/>
</dbReference>
<dbReference type="CDD" id="cd04489">
    <property type="entry name" value="ExoVII_LU_OBF"/>
    <property type="match status" value="1"/>
</dbReference>
<dbReference type="HAMAP" id="MF_00378">
    <property type="entry name" value="Exonuc_7_L"/>
    <property type="match status" value="1"/>
</dbReference>
<dbReference type="InterPro" id="IPR003753">
    <property type="entry name" value="Exonuc_VII_L"/>
</dbReference>
<dbReference type="InterPro" id="IPR020579">
    <property type="entry name" value="Exonuc_VII_lsu_C"/>
</dbReference>
<dbReference type="InterPro" id="IPR025824">
    <property type="entry name" value="OB-fold_nuc-bd_dom"/>
</dbReference>
<dbReference type="NCBIfam" id="TIGR00237">
    <property type="entry name" value="xseA"/>
    <property type="match status" value="1"/>
</dbReference>
<dbReference type="PANTHER" id="PTHR30008">
    <property type="entry name" value="EXODEOXYRIBONUCLEASE 7 LARGE SUBUNIT"/>
    <property type="match status" value="1"/>
</dbReference>
<dbReference type="PANTHER" id="PTHR30008:SF0">
    <property type="entry name" value="EXODEOXYRIBONUCLEASE 7 LARGE SUBUNIT"/>
    <property type="match status" value="1"/>
</dbReference>
<dbReference type="Pfam" id="PF02601">
    <property type="entry name" value="Exonuc_VII_L"/>
    <property type="match status" value="1"/>
</dbReference>
<dbReference type="Pfam" id="PF13742">
    <property type="entry name" value="tRNA_anti_2"/>
    <property type="match status" value="1"/>
</dbReference>
<keyword id="KW-0963">Cytoplasm</keyword>
<keyword id="KW-0269">Exonuclease</keyword>
<keyword id="KW-0378">Hydrolase</keyword>
<keyword id="KW-0540">Nuclease</keyword>
<proteinExistence type="inferred from homology"/>
<gene>
    <name evidence="1" type="primary">xseA</name>
    <name type="ordered locus">SAHV_1511</name>
</gene>
<feature type="chain" id="PRO_1000048787" description="Exodeoxyribonuclease 7 large subunit">
    <location>
        <begin position="1"/>
        <end position="445"/>
    </location>
</feature>
<name>EX7L_STAA1</name>
<accession>A7X2Q2</accession>
<protein>
    <recommendedName>
        <fullName evidence="1">Exodeoxyribonuclease 7 large subunit</fullName>
        <ecNumber evidence="1">3.1.11.6</ecNumber>
    </recommendedName>
    <alternativeName>
        <fullName evidence="1">Exodeoxyribonuclease VII large subunit</fullName>
        <shortName evidence="1">Exonuclease VII large subunit</shortName>
    </alternativeName>
</protein>
<sequence>MSDYLSVSALTKYIKYKFDQDPHLQSVLIKGELSNFKKHSSGHLYFNVKDKESVISAMMFKGSASKLNFEPKEGDEVLLEARVSVFERRGNYQIYVNKMQLDGIGNLYQKLEALKKKLTEEGCFDKANKKSIPKFPKKIAVLTASTGAAIRDIHSTINSRFPLAEQIQISTLVQGEKAKDDIIEKIEYADSLGVDTIIVGRGGGSIEDLWNFNEEAVVRAIYNCKTPIISAVGHETDFTLSDFAADIRAATPTQAAVIATPDQYELLQQIQQYQFTLTRFIKKHLEQQRKHVEHLSSYYKFKQPTLLYDQQIQRRDDLEKRLKQQIQATFEQQRHRLMLLQQRYNLKALLSSVNQEQQNNLQLTNQLVKLLNSKILSYKNDLKNKVENLNNLSPTNTMLRGYAIVNKKDEVITSTKDLTENDQLTLTMKDGLVDAKVTKVRCNND</sequence>
<organism>
    <name type="scientific">Staphylococcus aureus (strain Mu3 / ATCC 700698)</name>
    <dbReference type="NCBI Taxonomy" id="418127"/>
    <lineage>
        <taxon>Bacteria</taxon>
        <taxon>Bacillati</taxon>
        <taxon>Bacillota</taxon>
        <taxon>Bacilli</taxon>
        <taxon>Bacillales</taxon>
        <taxon>Staphylococcaceae</taxon>
        <taxon>Staphylococcus</taxon>
    </lineage>
</organism>
<reference key="1">
    <citation type="journal article" date="2008" name="Antimicrob. Agents Chemother.">
        <title>Mutated response regulator graR is responsible for phenotypic conversion of Staphylococcus aureus from heterogeneous vancomycin-intermediate resistance to vancomycin-intermediate resistance.</title>
        <authorList>
            <person name="Neoh H.-M."/>
            <person name="Cui L."/>
            <person name="Yuzawa H."/>
            <person name="Takeuchi F."/>
            <person name="Matsuo M."/>
            <person name="Hiramatsu K."/>
        </authorList>
    </citation>
    <scope>NUCLEOTIDE SEQUENCE [LARGE SCALE GENOMIC DNA]</scope>
    <source>
        <strain>Mu3 / ATCC 700698</strain>
    </source>
</reference>